<evidence type="ECO:0000255" key="1">
    <source>
        <dbReference type="PROSITE-ProRule" id="PRU00080"/>
    </source>
</evidence>
<feature type="chain" id="PRO_0000283451" description="Putative F-box protein At3g23950">
    <location>
        <begin position="1"/>
        <end position="418"/>
    </location>
</feature>
<feature type="domain" description="F-box" evidence="1">
    <location>
        <begin position="1"/>
        <end position="42"/>
    </location>
</feature>
<accession>Q9LIR3</accession>
<reference key="1">
    <citation type="journal article" date="2000" name="DNA Res.">
        <title>Structural analysis of Arabidopsis thaliana chromosome 3. II. Sequence features of the 4,251,695 bp regions covered by 90 P1, TAC and BAC clones.</title>
        <authorList>
            <person name="Kaneko T."/>
            <person name="Katoh T."/>
            <person name="Sato S."/>
            <person name="Nakamura Y."/>
            <person name="Asamizu E."/>
            <person name="Tabata S."/>
        </authorList>
    </citation>
    <scope>NUCLEOTIDE SEQUENCE [LARGE SCALE GENOMIC DNA]</scope>
    <source>
        <strain>cv. Columbia</strain>
    </source>
</reference>
<reference key="2">
    <citation type="journal article" date="2017" name="Plant J.">
        <title>Araport11: a complete reannotation of the Arabidopsis thaliana reference genome.</title>
        <authorList>
            <person name="Cheng C.Y."/>
            <person name="Krishnakumar V."/>
            <person name="Chan A.P."/>
            <person name="Thibaud-Nissen F."/>
            <person name="Schobel S."/>
            <person name="Town C.D."/>
        </authorList>
    </citation>
    <scope>GENOME REANNOTATION</scope>
    <source>
        <strain>cv. Columbia</strain>
    </source>
</reference>
<organism>
    <name type="scientific">Arabidopsis thaliana</name>
    <name type="common">Mouse-ear cress</name>
    <dbReference type="NCBI Taxonomy" id="3702"/>
    <lineage>
        <taxon>Eukaryota</taxon>
        <taxon>Viridiplantae</taxon>
        <taxon>Streptophyta</taxon>
        <taxon>Embryophyta</taxon>
        <taxon>Tracheophyta</taxon>
        <taxon>Spermatophyta</taxon>
        <taxon>Magnoliopsida</taxon>
        <taxon>eudicotyledons</taxon>
        <taxon>Gunneridae</taxon>
        <taxon>Pentapetalae</taxon>
        <taxon>rosids</taxon>
        <taxon>malvids</taxon>
        <taxon>Brassicales</taxon>
        <taxon>Brassicaceae</taxon>
        <taxon>Camelineae</taxon>
        <taxon>Arabidopsis</taxon>
    </lineage>
</organism>
<proteinExistence type="predicted"/>
<sequence length="418" mass="48440">MNIPPELTFEVLVRLPLKSLARFRSMCKEWKLVIDSEFFRDCFMSHNSSSVSWSIIQTRPHKLTLEIVGHHGCKTWGLTRSPGSLVSFFAETTIRKLQVLACTDGLVLLYVESCVGTPMYYVGNPLFQEWFRIPLRPKYTSQNVEKLRNHERFSDSGLVTKMQSGIVVSYKVVWLIAHTFAQVDFAIYSSNTGEWEIKNVTCLHSAYWFSHHKSIALNGILHWLSNLTGSFLAYDFYGGHHDACSIIYFPDNGKDYELPRFRRTITTSEGSIVYFNEFGGNANRKVRVWRLVKYTDGPEAWQLFWEASLASVTKLGIDYFPVVMHPLKSEIIYLWSRNKKGMVLFNLRTHVFSLHKESEDERKCMDGCTLSFNWCNEYMETVHRYFSPSFQGGPNLLLASQYVLPRWLSRLPRPQPSN</sequence>
<keyword id="KW-1185">Reference proteome</keyword>
<protein>
    <recommendedName>
        <fullName>Putative F-box protein At3g23950</fullName>
    </recommendedName>
</protein>
<name>FB181_ARATH</name>
<gene>
    <name type="ordered locus">At3g23950</name>
    <name type="ORF">F14O13.13</name>
</gene>
<dbReference type="EMBL" id="AP001297">
    <property type="protein sequence ID" value="BAB03012.1"/>
    <property type="molecule type" value="Genomic_DNA"/>
</dbReference>
<dbReference type="EMBL" id="CP002686">
    <property type="protein sequence ID" value="AEE76836.1"/>
    <property type="molecule type" value="Genomic_DNA"/>
</dbReference>
<dbReference type="RefSeq" id="NP_189037.1">
    <property type="nucleotide sequence ID" value="NM_113300.1"/>
</dbReference>
<dbReference type="FunCoup" id="Q9LIR3">
    <property type="interactions" value="136"/>
</dbReference>
<dbReference type="STRING" id="3702.Q9LIR3"/>
<dbReference type="PaxDb" id="3702-AT3G23950.1"/>
<dbReference type="ProteomicsDB" id="230855"/>
<dbReference type="EnsemblPlants" id="AT3G23950.1">
    <property type="protein sequence ID" value="AT3G23950.1"/>
    <property type="gene ID" value="AT3G23950"/>
</dbReference>
<dbReference type="GeneID" id="821978"/>
<dbReference type="Gramene" id="AT3G23950.1">
    <property type="protein sequence ID" value="AT3G23950.1"/>
    <property type="gene ID" value="AT3G23950"/>
</dbReference>
<dbReference type="KEGG" id="ath:AT3G23950"/>
<dbReference type="Araport" id="AT3G23950"/>
<dbReference type="TAIR" id="AT3G23950"/>
<dbReference type="HOGENOM" id="CLU_029240_0_0_1"/>
<dbReference type="InParanoid" id="Q9LIR3"/>
<dbReference type="OMA" id="NIICCNL"/>
<dbReference type="PhylomeDB" id="Q9LIR3"/>
<dbReference type="PRO" id="PR:Q9LIR3"/>
<dbReference type="Proteomes" id="UP000006548">
    <property type="component" value="Chromosome 3"/>
</dbReference>
<dbReference type="ExpressionAtlas" id="Q9LIR3">
    <property type="expression patterns" value="baseline and differential"/>
</dbReference>
<dbReference type="CDD" id="cd22157">
    <property type="entry name" value="F-box_AtFBW1-like"/>
    <property type="match status" value="1"/>
</dbReference>
<dbReference type="Gene3D" id="1.20.1280.50">
    <property type="match status" value="1"/>
</dbReference>
<dbReference type="InterPro" id="IPR056592">
    <property type="entry name" value="At3g26010-like_b-prop"/>
</dbReference>
<dbReference type="InterPro" id="IPR036047">
    <property type="entry name" value="F-box-like_dom_sf"/>
</dbReference>
<dbReference type="InterPro" id="IPR001810">
    <property type="entry name" value="F-box_dom"/>
</dbReference>
<dbReference type="InterPro" id="IPR050796">
    <property type="entry name" value="SCF_F-box_component"/>
</dbReference>
<dbReference type="PANTHER" id="PTHR31672">
    <property type="entry name" value="BNACNNG10540D PROTEIN"/>
    <property type="match status" value="1"/>
</dbReference>
<dbReference type="PANTHER" id="PTHR31672:SF9">
    <property type="entry name" value="F-BOX DOMAIN-CONTAINING PROTEIN"/>
    <property type="match status" value="1"/>
</dbReference>
<dbReference type="Pfam" id="PF24750">
    <property type="entry name" value="b-prop_At3g26010-like"/>
    <property type="match status" value="1"/>
</dbReference>
<dbReference type="Pfam" id="PF00646">
    <property type="entry name" value="F-box"/>
    <property type="match status" value="1"/>
</dbReference>
<dbReference type="SMART" id="SM00256">
    <property type="entry name" value="FBOX"/>
    <property type="match status" value="1"/>
</dbReference>
<dbReference type="SUPFAM" id="SSF81383">
    <property type="entry name" value="F-box domain"/>
    <property type="match status" value="1"/>
</dbReference>
<dbReference type="PROSITE" id="PS50181">
    <property type="entry name" value="FBOX"/>
    <property type="match status" value="1"/>
</dbReference>